<sequence>MQTIKCVVVGDGAVGKTCLLISYTTNKFPSEYVPTVFDNYAVTVMIGGEPYTLGLFDTAGQEDYDRLRPLSYPQTDVFLVCFSVVSPSSFENVKEKWVPEITHHCPKTPFLLVGTQIDLRDDPSTIEKLAKNKQKPITPETAEKLARDLKAVKYVECSALTQKGLKNVFDEAILAALEPPEPKKSRRCVLL</sequence>
<organism>
    <name type="scientific">Sus scrofa</name>
    <name type="common">Pig</name>
    <dbReference type="NCBI Taxonomy" id="9823"/>
    <lineage>
        <taxon>Eukaryota</taxon>
        <taxon>Metazoa</taxon>
        <taxon>Chordata</taxon>
        <taxon>Craniata</taxon>
        <taxon>Vertebrata</taxon>
        <taxon>Euteleostomi</taxon>
        <taxon>Mammalia</taxon>
        <taxon>Eutheria</taxon>
        <taxon>Laurasiatheria</taxon>
        <taxon>Artiodactyla</taxon>
        <taxon>Suina</taxon>
        <taxon>Suidae</taxon>
        <taxon>Sus</taxon>
    </lineage>
</organism>
<name>CDC42_PIG</name>
<accession>Q007T2</accession>
<accession>D1YSL6</accession>
<evidence type="ECO:0000250" key="1"/>
<evidence type="ECO:0000250" key="2">
    <source>
        <dbReference type="UniProtKB" id="P60766"/>
    </source>
</evidence>
<evidence type="ECO:0000250" key="3">
    <source>
        <dbReference type="UniProtKB" id="P60953"/>
    </source>
</evidence>
<evidence type="ECO:0000250" key="4">
    <source>
        <dbReference type="UniProtKB" id="Q8CFN2"/>
    </source>
</evidence>
<evidence type="ECO:0000255" key="5"/>
<evidence type="ECO:0000303" key="6">
    <source ref="2"/>
</evidence>
<evidence type="ECO:0000305" key="7"/>
<comment type="function">
    <text evidence="2 3 4">Plasma membrane-associated small GTPase which cycles between an active GTP-bound and an inactive GDP-bound state. In active state binds to a variety of effector proteins to regulate cellular responses. Involved in epithelial cell polarization processes. Regulates the bipolar attachment of spindle microtubules to kinetochores before chromosome congression in metaphase. Regulates cell migration. In neurons, plays a role in the extension and maintenance of the formation of filopodia, thin and actin-rich surface projections (By similarity). Required for DOCK10-mediated spine formation in Purkinje cells and hippocampal neurons. Facilitates filopodia formation upon DOCK11-activation (By similarity). Upon activation by CaMKII, modulates dendritic spine structural plasticity by relaying CaMKII transient activation to synapse-specific, long-term signaling (By similarity). Also plays a role in phagocytosis through organization of the F-actin cytoskeleton associated with forming phagocytic cups (By similarity). Upon activation by PLEKHG4B, involved in actin cytoskeletal remodeling during epithelial cell-cell junction formation (By similarity).</text>
</comment>
<comment type="catalytic activity">
    <reaction evidence="2 3">
        <text>GTP + H2O = GDP + phosphate + H(+)</text>
        <dbReference type="Rhea" id="RHEA:19669"/>
        <dbReference type="ChEBI" id="CHEBI:15377"/>
        <dbReference type="ChEBI" id="CHEBI:15378"/>
        <dbReference type="ChEBI" id="CHEBI:37565"/>
        <dbReference type="ChEBI" id="CHEBI:43474"/>
        <dbReference type="ChEBI" id="CHEBI:58189"/>
        <dbReference type="EC" id="3.6.5.2"/>
    </reaction>
    <physiologicalReaction direction="left-to-right" evidence="2 3">
        <dbReference type="Rhea" id="RHEA:19670"/>
    </physiologicalReaction>
</comment>
<comment type="activity regulation">
    <text evidence="2 3">Regulated by guanine nucleotide exchange factors (GEFs) which promote the exchange of bound GDP for free GTP, GTPase activating proteins (GAPs) which increase the GTP hydrolysis activity, and GDP dissociation inhibitors which inhibit the dissociation of the nucleotide from the GTPase.</text>
</comment>
<comment type="subunit">
    <text evidence="2 3">Interacts with CDC42EP1, CDC42EP2, CDC42EP3, CDC42EP4, CDC42EP5, CDC42SE1, CDC42SE2, PARD6A, PARD6B and PARD6G (in a GTP-dependent manner). Interacts with activated CSPG4 and with BAIAP2. Interacts with DOCK11/Zizimin2; the interaction activates CDC42 by exchanging GDP for GTP. Interacts with DOCK9; the interaction activates CDC42 by exchanging GDP for GTP. Interacts with DOCK8 (via DHR-2 domain); the interaction activates CDC42 by exchanging GDP for GTP. Interacts with IQGAP1. Interacts with NET1 and ARHGAP33/TCGAP. Part of a complex with PARD3, PARD6A or PARD6B and PRKCI or PRKCZ. The GTP-bound form interacts with CCPG1. Interacts with USP6. Interacts with NEK6. Part of a collagen stimulated complex involved in cell migration composed of CDC42, CRK, TNK2 and BCAR1/p130cas. Interacts with ITGB1BP1. Interacts with ARHGDIA; this interaction inactivates and stabilizes CDC42. Interacts with ARHGDIB; this maintains CDC42 in the inactive, GDP-bound form. Interacts in (GTP-bound form) with FNBP1L and ABI1, but only in the presence of FNBP1L. Interacts with MARCKS (By similarity). Interacts with CD151 and ITGB1 (By similarity).</text>
</comment>
<comment type="subcellular location">
    <subcellularLocation>
        <location evidence="2">Cell membrane</location>
        <topology evidence="2">Lipid-anchor</topology>
        <orientation evidence="2">Cytoplasmic side</orientation>
    </subcellularLocation>
    <subcellularLocation>
        <location evidence="3">Midbody</location>
    </subcellularLocation>
    <subcellularLocation>
        <location evidence="3">Cytoplasm</location>
        <location evidence="3">Cytoskeleton</location>
        <location evidence="3">Microtubule organizing center</location>
        <location evidence="3">Centrosome</location>
    </subcellularLocation>
    <subcellularLocation>
        <location evidence="3">Cytoplasm</location>
        <location evidence="3">Cytoskeleton</location>
        <location evidence="3">Spindle</location>
    </subcellularLocation>
    <subcellularLocation>
        <location evidence="2">Cytoplasm</location>
    </subcellularLocation>
    <subcellularLocation>
        <location evidence="2">Cell projection</location>
        <location evidence="2">Lamellipodium membrane</location>
        <topology evidence="2">Peripheral membrane protein</topology>
        <orientation evidence="2">Cytoplasmic side</orientation>
    </subcellularLocation>
    <subcellularLocation>
        <location evidence="2">Cell projection</location>
        <location evidence="2">Dendrite</location>
    </subcellularLocation>
    <text evidence="2 3">Localizes to spindle during prometaphase cells. Moves to the central spindle as cells progressed through anaphase to telophase. Localizes at the end of cytokinesis in the intercellular bridge formed between two daughter cells. Its localization is regulated by the activities of guanine nucleotide exchange factor ECT2 and GTPase activating protein RACGAP1. Colocalizes with NEK6 in the centrosome. In its active GTP-bound form localizes to the leading edge membrane of migrating dendritic cells.</text>
</comment>
<comment type="alternative products">
    <event type="alternative splicing"/>
    <isoform>
        <id>Q007T2-1</id>
        <name>2</name>
        <sequence type="displayed"/>
    </isoform>
    <isoform>
        <id>Q007T2-2</id>
        <name>1</name>
        <sequence type="described" ref="VSP_040587 VSP_040588 VSP_040589"/>
    </isoform>
</comment>
<comment type="PTM">
    <text evidence="1">Phosphorylated by SRC in an EGF-dependent manner, this stimulates the binding of the Rho-GDP dissociation inhibitor RhoGDI.</text>
</comment>
<comment type="similarity">
    <text evidence="7">Belongs to the small GTPase superfamily. Rho family. CDC42 subfamily.</text>
</comment>
<protein>
    <recommendedName>
        <fullName>Cell division control protein 42 homolog</fullName>
        <ecNumber evidence="2 3">3.6.5.2</ecNumber>
    </recommendedName>
</protein>
<proteinExistence type="evidence at transcript level"/>
<gene>
    <name type="primary">CDC42</name>
</gene>
<feature type="chain" id="PRO_0000270827" description="Cell division control protein 42 homolog">
    <location>
        <begin position="1"/>
        <end position="188"/>
    </location>
</feature>
<feature type="propeptide" id="PRO_0000270828" description="Removed in mature form" evidence="1">
    <location>
        <begin position="189"/>
        <end position="191"/>
    </location>
</feature>
<feature type="short sequence motif" description="Effector region" evidence="5">
    <location>
        <begin position="32"/>
        <end position="40"/>
    </location>
</feature>
<feature type="binding site" evidence="1">
    <location>
        <begin position="10"/>
        <end position="17"/>
    </location>
    <ligand>
        <name>GTP</name>
        <dbReference type="ChEBI" id="CHEBI:37565"/>
    </ligand>
</feature>
<feature type="binding site" evidence="1">
    <location>
        <begin position="57"/>
        <end position="61"/>
    </location>
    <ligand>
        <name>GTP</name>
        <dbReference type="ChEBI" id="CHEBI:37565"/>
    </ligand>
</feature>
<feature type="binding site" evidence="1">
    <location>
        <begin position="115"/>
        <end position="118"/>
    </location>
    <ligand>
        <name>GTP</name>
        <dbReference type="ChEBI" id="CHEBI:37565"/>
    </ligand>
</feature>
<feature type="modified residue" description="Phosphotyrosine; by SRC" evidence="3">
    <location>
        <position position="64"/>
    </location>
</feature>
<feature type="modified residue" description="Cysteine methyl ester" evidence="1">
    <location>
        <position position="188"/>
    </location>
</feature>
<feature type="lipid moiety-binding region" description="S-geranylgeranyl cysteine" evidence="1">
    <location>
        <position position="188"/>
    </location>
</feature>
<feature type="splice variant" id="VSP_040587" description="In isoform 1." evidence="6">
    <original>K</original>
    <variation>R</variation>
    <location>
        <position position="163"/>
    </location>
</feature>
<feature type="splice variant" id="VSP_040588" description="In isoform 1." evidence="6">
    <original>A</original>
    <variation>S</variation>
    <location>
        <position position="175"/>
    </location>
</feature>
<feature type="splice variant" id="VSP_040589" description="In isoform 1." evidence="6">
    <original>PKKSRRCVLL</original>
    <variation>TQPKRKCCIF</variation>
    <location>
        <begin position="182"/>
        <end position="191"/>
    </location>
</feature>
<keyword id="KW-0025">Alternative splicing</keyword>
<keyword id="KW-1003">Cell membrane</keyword>
<keyword id="KW-0966">Cell projection</keyword>
<keyword id="KW-0963">Cytoplasm</keyword>
<keyword id="KW-0206">Cytoskeleton</keyword>
<keyword id="KW-0221">Differentiation</keyword>
<keyword id="KW-0342">GTP-binding</keyword>
<keyword id="KW-0378">Hydrolase</keyword>
<keyword id="KW-0449">Lipoprotein</keyword>
<keyword id="KW-0472">Membrane</keyword>
<keyword id="KW-0488">Methylation</keyword>
<keyword id="KW-0524">Neurogenesis</keyword>
<keyword id="KW-0547">Nucleotide-binding</keyword>
<keyword id="KW-0597">Phosphoprotein</keyword>
<keyword id="KW-0636">Prenylation</keyword>
<keyword id="KW-1185">Reference proteome</keyword>
<dbReference type="EC" id="3.6.5.2" evidence="2 3"/>
<dbReference type="EMBL" id="DQ915496">
    <property type="protein sequence ID" value="ABJ09401.1"/>
    <property type="molecule type" value="mRNA"/>
</dbReference>
<dbReference type="EMBL" id="AK231866">
    <property type="protein sequence ID" value="BAI50642.1"/>
    <property type="molecule type" value="mRNA"/>
</dbReference>
<dbReference type="RefSeq" id="NP_001072148.1">
    <molecule id="Q007T2-2"/>
    <property type="nucleotide sequence ID" value="NM_001078680.1"/>
</dbReference>
<dbReference type="RefSeq" id="XP_005656096.1">
    <molecule id="Q007T2-1"/>
    <property type="nucleotide sequence ID" value="XM_005656039.3"/>
</dbReference>
<dbReference type="BMRB" id="Q007T2"/>
<dbReference type="SMR" id="Q007T2"/>
<dbReference type="FunCoup" id="Q007T2">
    <property type="interactions" value="3125"/>
</dbReference>
<dbReference type="STRING" id="9823.ENSSSCP00000029815"/>
<dbReference type="PaxDb" id="9823-ENSSSCP00000003820"/>
<dbReference type="PeptideAtlas" id="Q007T2"/>
<dbReference type="Ensembl" id="ENSSSCT00025091006.1">
    <molecule id="Q007T2-1"/>
    <property type="protein sequence ID" value="ENSSSCP00025039881.1"/>
    <property type="gene ID" value="ENSSSCG00025066075.1"/>
</dbReference>
<dbReference type="Ensembl" id="ENSSSCT00035109564.1">
    <molecule id="Q007T2-1"/>
    <property type="protein sequence ID" value="ENSSSCP00035047578.1"/>
    <property type="gene ID" value="ENSSSCG00035080048.1"/>
</dbReference>
<dbReference type="Ensembl" id="ENSSSCT00050103462.1">
    <molecule id="Q007T2-1"/>
    <property type="protein sequence ID" value="ENSSSCP00050045252.1"/>
    <property type="gene ID" value="ENSSSCG00050075450.1"/>
</dbReference>
<dbReference type="Ensembl" id="ENSSSCT00060082664.1">
    <molecule id="Q007T2-1"/>
    <property type="protein sequence ID" value="ENSSSCP00060035803.1"/>
    <property type="gene ID" value="ENSSSCG00060060565.1"/>
</dbReference>
<dbReference type="Ensembl" id="ENSSSCT00065101263.1">
    <molecule id="Q007T2-1"/>
    <property type="protein sequence ID" value="ENSSSCP00065044577.1"/>
    <property type="gene ID" value="ENSSSCG00065073552.1"/>
</dbReference>
<dbReference type="Ensembl" id="ENSSSCT00065101275.1">
    <molecule id="Q007T2-1"/>
    <property type="protein sequence ID" value="ENSSSCP00065044583.1"/>
    <property type="gene ID" value="ENSSSCG00065073552.1"/>
</dbReference>
<dbReference type="Ensembl" id="ENSSSCT00070056502.1">
    <molecule id="Q007T2-1"/>
    <property type="protein sequence ID" value="ENSSSCP00070047999.1"/>
    <property type="gene ID" value="ENSSSCG00070028168.1"/>
</dbReference>
<dbReference type="Ensembl" id="ENSSSCT00070056507.1">
    <molecule id="Q007T2-1"/>
    <property type="protein sequence ID" value="ENSSSCP00070048004.1"/>
    <property type="gene ID" value="ENSSSCG00070028168.1"/>
</dbReference>
<dbReference type="Ensembl" id="ENSSSCT00110056882">
    <molecule id="Q007T2-1"/>
    <property type="protein sequence ID" value="ENSSSCP00110039521"/>
    <property type="gene ID" value="ENSSSCG00110029795"/>
</dbReference>
<dbReference type="Ensembl" id="ENSSSCT00115038284">
    <molecule id="Q007T2-1"/>
    <property type="protein sequence ID" value="ENSSSCP00115036153"/>
    <property type="gene ID" value="ENSSSCG00115021608"/>
</dbReference>
<dbReference type="GeneID" id="780428"/>
<dbReference type="KEGG" id="ssc:780428"/>
<dbReference type="CTD" id="998"/>
<dbReference type="eggNOG" id="KOG0393">
    <property type="taxonomic scope" value="Eukaryota"/>
</dbReference>
<dbReference type="HOGENOM" id="CLU_041217_21_3_1"/>
<dbReference type="InParanoid" id="Q007T2"/>
<dbReference type="OrthoDB" id="8830751at2759"/>
<dbReference type="TreeFam" id="TF101109"/>
<dbReference type="Reactome" id="R-SSC-114604">
    <property type="pathway name" value="GPVI-mediated activation cascade"/>
</dbReference>
<dbReference type="Reactome" id="R-SSC-182971">
    <property type="pathway name" value="EGFR downregulation"/>
</dbReference>
<dbReference type="Reactome" id="R-SSC-2029482">
    <property type="pathway name" value="Regulation of actin dynamics for phagocytic cup formation"/>
</dbReference>
<dbReference type="Reactome" id="R-SSC-389359">
    <property type="pathway name" value="CD28 dependent Vav1 pathway"/>
</dbReference>
<dbReference type="Reactome" id="R-SSC-3928662">
    <property type="pathway name" value="EPHB-mediated forward signaling"/>
</dbReference>
<dbReference type="Reactome" id="R-SSC-4420097">
    <property type="pathway name" value="VEGFA-VEGFR2 Pathway"/>
</dbReference>
<dbReference type="Reactome" id="R-SSC-525793">
    <property type="pathway name" value="Myogenesis"/>
</dbReference>
<dbReference type="Reactome" id="R-SSC-5625970">
    <property type="pathway name" value="RHO GTPases activate KTN1"/>
</dbReference>
<dbReference type="Reactome" id="R-SSC-5626467">
    <property type="pathway name" value="RHO GTPases activate IQGAPs"/>
</dbReference>
<dbReference type="Reactome" id="R-SSC-5627123">
    <property type="pathway name" value="RHO GTPases activate PAKs"/>
</dbReference>
<dbReference type="Reactome" id="R-SSC-5663213">
    <property type="pathway name" value="RHO GTPases Activate WASPs and WAVEs"/>
</dbReference>
<dbReference type="Reactome" id="R-SSC-5663220">
    <property type="pathway name" value="RHO GTPases Activate Formins"/>
</dbReference>
<dbReference type="Reactome" id="R-SSC-5687128">
    <property type="pathway name" value="MAPK6/MAPK4 signaling"/>
</dbReference>
<dbReference type="Reactome" id="R-SSC-8964616">
    <property type="pathway name" value="G beta:gamma signalling through CDC42"/>
</dbReference>
<dbReference type="Reactome" id="R-SSC-9013148">
    <property type="pathway name" value="CDC42 GTPase cycle"/>
</dbReference>
<dbReference type="Reactome" id="R-SSC-9013149">
    <property type="pathway name" value="RAC1 GTPase cycle"/>
</dbReference>
<dbReference type="Reactome" id="R-SSC-9013404">
    <property type="pathway name" value="RAC2 GTPase cycle"/>
</dbReference>
<dbReference type="Reactome" id="R-SSC-9013406">
    <property type="pathway name" value="RHOQ GTPase cycle"/>
</dbReference>
<dbReference type="Reactome" id="R-SSC-9013408">
    <property type="pathway name" value="RHOG GTPase cycle"/>
</dbReference>
<dbReference type="Reactome" id="R-SSC-9013420">
    <property type="pathway name" value="RHOU GTPase cycle"/>
</dbReference>
<dbReference type="Reactome" id="R-SSC-9013423">
    <property type="pathway name" value="RAC3 GTPase cycle"/>
</dbReference>
<dbReference type="Reactome" id="R-SSC-9013424">
    <property type="pathway name" value="RHOV GTPase cycle"/>
</dbReference>
<dbReference type="Reactome" id="R-SSC-983231">
    <property type="pathway name" value="Factors involved in megakaryocyte development and platelet production"/>
</dbReference>
<dbReference type="Proteomes" id="UP000008227">
    <property type="component" value="Unplaced"/>
</dbReference>
<dbReference type="Proteomes" id="UP000314985">
    <property type="component" value="Chromosome 6"/>
</dbReference>
<dbReference type="Proteomes" id="UP000694570">
    <property type="component" value="Unplaced"/>
</dbReference>
<dbReference type="Proteomes" id="UP000694571">
    <property type="component" value="Unplaced"/>
</dbReference>
<dbReference type="Proteomes" id="UP000694720">
    <property type="component" value="Unplaced"/>
</dbReference>
<dbReference type="Proteomes" id="UP000694722">
    <property type="component" value="Unplaced"/>
</dbReference>
<dbReference type="Proteomes" id="UP000694723">
    <property type="component" value="Unplaced"/>
</dbReference>
<dbReference type="Proteomes" id="UP000694724">
    <property type="component" value="Unplaced"/>
</dbReference>
<dbReference type="Proteomes" id="UP000694725">
    <property type="component" value="Unplaced"/>
</dbReference>
<dbReference type="Proteomes" id="UP000694726">
    <property type="component" value="Unplaced"/>
</dbReference>
<dbReference type="Proteomes" id="UP000694727">
    <property type="component" value="Unplaced"/>
</dbReference>
<dbReference type="Proteomes" id="UP000694728">
    <property type="component" value="Unplaced"/>
</dbReference>
<dbReference type="GO" id="GO:0005813">
    <property type="term" value="C:centrosome"/>
    <property type="evidence" value="ECO:0007669"/>
    <property type="project" value="UniProtKB-SubCell"/>
</dbReference>
<dbReference type="GO" id="GO:0005737">
    <property type="term" value="C:cytoplasm"/>
    <property type="evidence" value="ECO:0007669"/>
    <property type="project" value="UniProtKB-SubCell"/>
</dbReference>
<dbReference type="GO" id="GO:0030425">
    <property type="term" value="C:dendrite"/>
    <property type="evidence" value="ECO:0007669"/>
    <property type="project" value="UniProtKB-SubCell"/>
</dbReference>
<dbReference type="GO" id="GO:0031258">
    <property type="term" value="C:lamellipodium membrane"/>
    <property type="evidence" value="ECO:0007669"/>
    <property type="project" value="UniProtKB-SubCell"/>
</dbReference>
<dbReference type="GO" id="GO:0016020">
    <property type="term" value="C:membrane"/>
    <property type="evidence" value="ECO:0000250"/>
    <property type="project" value="UniProtKB"/>
</dbReference>
<dbReference type="GO" id="GO:0030496">
    <property type="term" value="C:midbody"/>
    <property type="evidence" value="ECO:0000250"/>
    <property type="project" value="UniProtKB"/>
</dbReference>
<dbReference type="GO" id="GO:0072686">
    <property type="term" value="C:mitotic spindle"/>
    <property type="evidence" value="ECO:0000250"/>
    <property type="project" value="UniProtKB"/>
</dbReference>
<dbReference type="GO" id="GO:0005886">
    <property type="term" value="C:plasma membrane"/>
    <property type="evidence" value="ECO:0000318"/>
    <property type="project" value="GO_Central"/>
</dbReference>
<dbReference type="GO" id="GO:0051233">
    <property type="term" value="C:spindle midzone"/>
    <property type="evidence" value="ECO:0000250"/>
    <property type="project" value="UniProtKB"/>
</dbReference>
<dbReference type="GO" id="GO:0003925">
    <property type="term" value="F:G protein activity"/>
    <property type="evidence" value="ECO:0007669"/>
    <property type="project" value="UniProtKB-EC"/>
</dbReference>
<dbReference type="GO" id="GO:0005525">
    <property type="term" value="F:GTP binding"/>
    <property type="evidence" value="ECO:0000318"/>
    <property type="project" value="GO_Central"/>
</dbReference>
<dbReference type="GO" id="GO:0003924">
    <property type="term" value="F:GTPase activity"/>
    <property type="evidence" value="ECO:0000318"/>
    <property type="project" value="GO_Central"/>
</dbReference>
<dbReference type="GO" id="GO:0019901">
    <property type="term" value="F:protein kinase binding"/>
    <property type="evidence" value="ECO:0000318"/>
    <property type="project" value="GO_Central"/>
</dbReference>
<dbReference type="GO" id="GO:0007015">
    <property type="term" value="P:actin filament organization"/>
    <property type="evidence" value="ECO:0000250"/>
    <property type="project" value="UniProtKB"/>
</dbReference>
<dbReference type="GO" id="GO:0034329">
    <property type="term" value="P:cell junction assembly"/>
    <property type="evidence" value="ECO:0000250"/>
    <property type="project" value="UniProtKB"/>
</dbReference>
<dbReference type="GO" id="GO:0060997">
    <property type="term" value="P:dendritic spine morphogenesis"/>
    <property type="evidence" value="ECO:0000250"/>
    <property type="project" value="UniProtKB"/>
</dbReference>
<dbReference type="GO" id="GO:0006897">
    <property type="term" value="P:endocytosis"/>
    <property type="evidence" value="ECO:0000318"/>
    <property type="project" value="GO_Central"/>
</dbReference>
<dbReference type="GO" id="GO:0030010">
    <property type="term" value="P:establishment of cell polarity"/>
    <property type="evidence" value="ECO:0000318"/>
    <property type="project" value="GO_Central"/>
</dbReference>
<dbReference type="GO" id="GO:0045198">
    <property type="term" value="P:establishment of epithelial cell apical/basal polarity"/>
    <property type="evidence" value="ECO:0000250"/>
    <property type="project" value="UniProtKB"/>
</dbReference>
<dbReference type="GO" id="GO:0006911">
    <property type="term" value="P:phagocytosis, engulfment"/>
    <property type="evidence" value="ECO:0000250"/>
    <property type="project" value="UniProtKB"/>
</dbReference>
<dbReference type="GO" id="GO:0032467">
    <property type="term" value="P:positive regulation of cytokinesis"/>
    <property type="evidence" value="ECO:0000250"/>
    <property type="project" value="UniProtKB"/>
</dbReference>
<dbReference type="GO" id="GO:0051491">
    <property type="term" value="P:positive regulation of filopodium assembly"/>
    <property type="evidence" value="ECO:0000250"/>
    <property type="project" value="UniProtKB"/>
</dbReference>
<dbReference type="GO" id="GO:0048549">
    <property type="term" value="P:positive regulation of pinocytosis"/>
    <property type="evidence" value="ECO:0000250"/>
    <property type="project" value="UniProtKB"/>
</dbReference>
<dbReference type="GO" id="GO:1900026">
    <property type="term" value="P:positive regulation of substrate adhesion-dependent cell spreading"/>
    <property type="evidence" value="ECO:0000250"/>
    <property type="project" value="UniProtKB"/>
</dbReference>
<dbReference type="GO" id="GO:0051988">
    <property type="term" value="P:regulation of attachment of spindle microtubules to kinetochore"/>
    <property type="evidence" value="ECO:0000250"/>
    <property type="project" value="UniProtKB"/>
</dbReference>
<dbReference type="GO" id="GO:0051489">
    <property type="term" value="P:regulation of filopodium assembly"/>
    <property type="evidence" value="ECO:0000250"/>
    <property type="project" value="UniProtKB"/>
</dbReference>
<dbReference type="GO" id="GO:0007165">
    <property type="term" value="P:signal transduction"/>
    <property type="evidence" value="ECO:0000318"/>
    <property type="project" value="GO_Central"/>
</dbReference>
<dbReference type="GO" id="GO:0007264">
    <property type="term" value="P:small GTPase-mediated signal transduction"/>
    <property type="evidence" value="ECO:0007669"/>
    <property type="project" value="InterPro"/>
</dbReference>
<dbReference type="CDD" id="cd01874">
    <property type="entry name" value="Cdc42"/>
    <property type="match status" value="1"/>
</dbReference>
<dbReference type="FunFam" id="3.40.50.300:FF:000167">
    <property type="entry name" value="Cell division control protein 42 homolog"/>
    <property type="match status" value="1"/>
</dbReference>
<dbReference type="Gene3D" id="3.40.50.300">
    <property type="entry name" value="P-loop containing nucleotide triphosphate hydrolases"/>
    <property type="match status" value="1"/>
</dbReference>
<dbReference type="InterPro" id="IPR037874">
    <property type="entry name" value="Cdc42"/>
</dbReference>
<dbReference type="InterPro" id="IPR027417">
    <property type="entry name" value="P-loop_NTPase"/>
</dbReference>
<dbReference type="InterPro" id="IPR005225">
    <property type="entry name" value="Small_GTP-bd"/>
</dbReference>
<dbReference type="InterPro" id="IPR001806">
    <property type="entry name" value="Small_GTPase"/>
</dbReference>
<dbReference type="InterPro" id="IPR003578">
    <property type="entry name" value="Small_GTPase_Rho"/>
</dbReference>
<dbReference type="NCBIfam" id="TIGR00231">
    <property type="entry name" value="small_GTP"/>
    <property type="match status" value="1"/>
</dbReference>
<dbReference type="PANTHER" id="PTHR24072">
    <property type="entry name" value="RHO FAMILY GTPASE"/>
    <property type="match status" value="1"/>
</dbReference>
<dbReference type="Pfam" id="PF00071">
    <property type="entry name" value="Ras"/>
    <property type="match status" value="1"/>
</dbReference>
<dbReference type="PRINTS" id="PR00449">
    <property type="entry name" value="RASTRNSFRMNG"/>
</dbReference>
<dbReference type="SMART" id="SM00175">
    <property type="entry name" value="RAB"/>
    <property type="match status" value="1"/>
</dbReference>
<dbReference type="SMART" id="SM00173">
    <property type="entry name" value="RAS"/>
    <property type="match status" value="1"/>
</dbReference>
<dbReference type="SMART" id="SM00174">
    <property type="entry name" value="RHO"/>
    <property type="match status" value="1"/>
</dbReference>
<dbReference type="SUPFAM" id="SSF52540">
    <property type="entry name" value="P-loop containing nucleoside triphosphate hydrolases"/>
    <property type="match status" value="1"/>
</dbReference>
<dbReference type="PROSITE" id="PS51420">
    <property type="entry name" value="RHO"/>
    <property type="match status" value="1"/>
</dbReference>
<reference key="1">
    <citation type="journal article" date="2004" name="Nucleic Acids Res.">
        <title>PEDE (Pig EST Data Explorer): construction of a database for ESTs derived from porcine full-length cDNA libraries.</title>
        <authorList>
            <person name="Uenishi H."/>
            <person name="Eguchi T."/>
            <person name="Suzuki K."/>
            <person name="Sawazaki T."/>
            <person name="Toki D."/>
            <person name="Shinkai H."/>
            <person name="Okumura N."/>
            <person name="Hamasima N."/>
            <person name="Awata T."/>
        </authorList>
    </citation>
    <scope>NUCLEOTIDE SEQUENCE [LARGE SCALE MRNA] (ISOFORM 2)</scope>
    <source>
        <tissue>Lung</tissue>
    </source>
</reference>
<reference key="2">
    <citation type="submission" date="2006-08" db="EMBL/GenBank/DDBJ databases">
        <authorList>
            <person name="Liu G.Y."/>
        </authorList>
    </citation>
    <scope>NUCLEOTIDE SEQUENCE [LARGE SCALE MRNA] (ISOFORM 1)</scope>
</reference>